<reference key="1">
    <citation type="journal article" date="1999" name="DNA Res.">
        <title>Complete genome sequence of an aerobic hyper-thermophilic crenarchaeon, Aeropyrum pernix K1.</title>
        <authorList>
            <person name="Kawarabayasi Y."/>
            <person name="Hino Y."/>
            <person name="Horikawa H."/>
            <person name="Yamazaki S."/>
            <person name="Haikawa Y."/>
            <person name="Jin-no K."/>
            <person name="Takahashi M."/>
            <person name="Sekine M."/>
            <person name="Baba S."/>
            <person name="Ankai A."/>
            <person name="Kosugi H."/>
            <person name="Hosoyama A."/>
            <person name="Fukui S."/>
            <person name="Nagai Y."/>
            <person name="Nishijima K."/>
            <person name="Nakazawa H."/>
            <person name="Takamiya M."/>
            <person name="Masuda S."/>
            <person name="Funahashi T."/>
            <person name="Tanaka T."/>
            <person name="Kudoh Y."/>
            <person name="Yamazaki J."/>
            <person name="Kushida N."/>
            <person name="Oguchi A."/>
            <person name="Aoki K."/>
            <person name="Kubota K."/>
            <person name="Nakamura Y."/>
            <person name="Nomura N."/>
            <person name="Sako Y."/>
            <person name="Kikuchi H."/>
        </authorList>
    </citation>
    <scope>NUCLEOTIDE SEQUENCE [LARGE SCALE GENOMIC DNA]</scope>
    <source>
        <strain>ATCC 700893 / DSM 11879 / JCM 9820 / NBRC 100138 / K1</strain>
    </source>
</reference>
<comment type="catalytic activity">
    <reaction>
        <text>tRNA(Arg) + L-arginine + ATP = L-arginyl-tRNA(Arg) + AMP + diphosphate</text>
        <dbReference type="Rhea" id="RHEA:20301"/>
        <dbReference type="Rhea" id="RHEA-COMP:9658"/>
        <dbReference type="Rhea" id="RHEA-COMP:9673"/>
        <dbReference type="ChEBI" id="CHEBI:30616"/>
        <dbReference type="ChEBI" id="CHEBI:32682"/>
        <dbReference type="ChEBI" id="CHEBI:33019"/>
        <dbReference type="ChEBI" id="CHEBI:78442"/>
        <dbReference type="ChEBI" id="CHEBI:78513"/>
        <dbReference type="ChEBI" id="CHEBI:456215"/>
        <dbReference type="EC" id="6.1.1.19"/>
    </reaction>
</comment>
<comment type="subcellular location">
    <subcellularLocation>
        <location evidence="1">Cytoplasm</location>
    </subcellularLocation>
</comment>
<comment type="similarity">
    <text evidence="2">Belongs to the class-I aminoacyl-tRNA synthetase family.</text>
</comment>
<keyword id="KW-0030">Aminoacyl-tRNA synthetase</keyword>
<keyword id="KW-0067">ATP-binding</keyword>
<keyword id="KW-0963">Cytoplasm</keyword>
<keyword id="KW-0436">Ligase</keyword>
<keyword id="KW-0547">Nucleotide-binding</keyword>
<keyword id="KW-0648">Protein biosynthesis</keyword>
<keyword id="KW-1185">Reference proteome</keyword>
<name>SYR_AERPE</name>
<gene>
    <name type="primary">argS</name>
    <name type="ordered locus">APE_1756</name>
</gene>
<evidence type="ECO:0000250" key="1"/>
<evidence type="ECO:0000305" key="2"/>
<protein>
    <recommendedName>
        <fullName>Arginine--tRNA ligase</fullName>
        <ecNumber>6.1.1.19</ecNumber>
    </recommendedName>
    <alternativeName>
        <fullName>Arginyl-tRNA synthetase</fullName>
        <shortName>ArgRS</shortName>
    </alternativeName>
</protein>
<proteinExistence type="inferred from homology"/>
<feature type="chain" id="PRO_0000151642" description="Arginine--tRNA ligase">
    <location>
        <begin position="1"/>
        <end position="644"/>
    </location>
</feature>
<feature type="short sequence motif" description="'HIGH' region">
    <location>
        <begin position="129"/>
        <end position="139"/>
    </location>
</feature>
<accession>Q9YB39</accession>
<organism>
    <name type="scientific">Aeropyrum pernix (strain ATCC 700893 / DSM 11879 / JCM 9820 / NBRC 100138 / K1)</name>
    <dbReference type="NCBI Taxonomy" id="272557"/>
    <lineage>
        <taxon>Archaea</taxon>
        <taxon>Thermoproteota</taxon>
        <taxon>Thermoprotei</taxon>
        <taxon>Desulfurococcales</taxon>
        <taxon>Desulfurococcaceae</taxon>
        <taxon>Aeropyrum</taxon>
    </lineage>
</organism>
<dbReference type="EC" id="6.1.1.19"/>
<dbReference type="EMBL" id="BA000002">
    <property type="protein sequence ID" value="BAA80759.1"/>
    <property type="molecule type" value="Genomic_DNA"/>
</dbReference>
<dbReference type="PIR" id="B72559">
    <property type="entry name" value="B72559"/>
</dbReference>
<dbReference type="RefSeq" id="WP_010866576.1">
    <property type="nucleotide sequence ID" value="NC_000854.2"/>
</dbReference>
<dbReference type="SMR" id="Q9YB39"/>
<dbReference type="STRING" id="272557.APE_1756"/>
<dbReference type="EnsemblBacteria" id="BAA80759">
    <property type="protein sequence ID" value="BAA80759"/>
    <property type="gene ID" value="APE_1756"/>
</dbReference>
<dbReference type="GeneID" id="1446221"/>
<dbReference type="KEGG" id="ape:APE_1756"/>
<dbReference type="PATRIC" id="fig|272557.25.peg.1181"/>
<dbReference type="eggNOG" id="arCOG00487">
    <property type="taxonomic scope" value="Archaea"/>
</dbReference>
<dbReference type="Proteomes" id="UP000002518">
    <property type="component" value="Chromosome"/>
</dbReference>
<dbReference type="GO" id="GO:0005737">
    <property type="term" value="C:cytoplasm"/>
    <property type="evidence" value="ECO:0007669"/>
    <property type="project" value="UniProtKB-SubCell"/>
</dbReference>
<dbReference type="GO" id="GO:0004814">
    <property type="term" value="F:arginine-tRNA ligase activity"/>
    <property type="evidence" value="ECO:0007669"/>
    <property type="project" value="UniProtKB-UniRule"/>
</dbReference>
<dbReference type="GO" id="GO:0005524">
    <property type="term" value="F:ATP binding"/>
    <property type="evidence" value="ECO:0007669"/>
    <property type="project" value="UniProtKB-UniRule"/>
</dbReference>
<dbReference type="GO" id="GO:0006420">
    <property type="term" value="P:arginyl-tRNA aminoacylation"/>
    <property type="evidence" value="ECO:0007669"/>
    <property type="project" value="UniProtKB-UniRule"/>
</dbReference>
<dbReference type="CDD" id="cd00671">
    <property type="entry name" value="ArgRS_core"/>
    <property type="match status" value="1"/>
</dbReference>
<dbReference type="Gene3D" id="3.30.1360.70">
    <property type="entry name" value="Arginyl tRNA synthetase N-terminal domain"/>
    <property type="match status" value="1"/>
</dbReference>
<dbReference type="Gene3D" id="3.40.50.620">
    <property type="entry name" value="HUPs"/>
    <property type="match status" value="1"/>
</dbReference>
<dbReference type="Gene3D" id="1.10.730.10">
    <property type="entry name" value="Isoleucyl-tRNA Synthetase, Domain 1"/>
    <property type="match status" value="1"/>
</dbReference>
<dbReference type="HAMAP" id="MF_00123">
    <property type="entry name" value="Arg_tRNA_synth"/>
    <property type="match status" value="1"/>
</dbReference>
<dbReference type="InterPro" id="IPR001278">
    <property type="entry name" value="Arg-tRNA-ligase"/>
</dbReference>
<dbReference type="InterPro" id="IPR005148">
    <property type="entry name" value="Arg-tRNA-synth_N"/>
</dbReference>
<dbReference type="InterPro" id="IPR036695">
    <property type="entry name" value="Arg-tRNA-synth_N_sf"/>
</dbReference>
<dbReference type="InterPro" id="IPR035684">
    <property type="entry name" value="ArgRS_core"/>
</dbReference>
<dbReference type="InterPro" id="IPR008909">
    <property type="entry name" value="DALR_anticod-bd"/>
</dbReference>
<dbReference type="InterPro" id="IPR014729">
    <property type="entry name" value="Rossmann-like_a/b/a_fold"/>
</dbReference>
<dbReference type="InterPro" id="IPR009080">
    <property type="entry name" value="tRNAsynth_Ia_anticodon-bd"/>
</dbReference>
<dbReference type="NCBIfam" id="TIGR00456">
    <property type="entry name" value="argS"/>
    <property type="match status" value="1"/>
</dbReference>
<dbReference type="NCBIfam" id="NF002446">
    <property type="entry name" value="PRK01611.3-3"/>
    <property type="match status" value="1"/>
</dbReference>
<dbReference type="PANTHER" id="PTHR11956:SF5">
    <property type="entry name" value="ARGININE--TRNA LIGASE, CYTOPLASMIC"/>
    <property type="match status" value="1"/>
</dbReference>
<dbReference type="PANTHER" id="PTHR11956">
    <property type="entry name" value="ARGINYL-TRNA SYNTHETASE"/>
    <property type="match status" value="1"/>
</dbReference>
<dbReference type="Pfam" id="PF03485">
    <property type="entry name" value="Arg_tRNA_synt_N"/>
    <property type="match status" value="1"/>
</dbReference>
<dbReference type="Pfam" id="PF05746">
    <property type="entry name" value="DALR_1"/>
    <property type="match status" value="1"/>
</dbReference>
<dbReference type="Pfam" id="PF00750">
    <property type="entry name" value="tRNA-synt_1d"/>
    <property type="match status" value="2"/>
</dbReference>
<dbReference type="PRINTS" id="PR01038">
    <property type="entry name" value="TRNASYNTHARG"/>
</dbReference>
<dbReference type="SMART" id="SM01016">
    <property type="entry name" value="Arg_tRNA_synt_N"/>
    <property type="match status" value="1"/>
</dbReference>
<dbReference type="SMART" id="SM00836">
    <property type="entry name" value="DALR_1"/>
    <property type="match status" value="1"/>
</dbReference>
<dbReference type="SUPFAM" id="SSF47323">
    <property type="entry name" value="Anticodon-binding domain of a subclass of class I aminoacyl-tRNA synthetases"/>
    <property type="match status" value="1"/>
</dbReference>
<dbReference type="SUPFAM" id="SSF55190">
    <property type="entry name" value="Arginyl-tRNA synthetase (ArgRS), N-terminal 'additional' domain"/>
    <property type="match status" value="1"/>
</dbReference>
<dbReference type="SUPFAM" id="SSF52374">
    <property type="entry name" value="Nucleotidylyl transferase"/>
    <property type="match status" value="1"/>
</dbReference>
<sequence>MASSIDPLTRLHGILSSYLSEVLGVDRSVVERLLAPPPRKEYGDLGFPLMRFARSSNASADSIVESLRGKLWERGITWASPTLEAGYLNIVFDVEKLGDEVFRLLASGWRPSTARTSRPETIVVEHTSANPIHPLHLGHARNSSLGDALARLLEARGHRVNRRFYVDDVGRQAVVASLGFKLSGVTPRELASRMGVKVDHAVGWVYAVTHNALETVTARKRGDTSKVDEALSTLARLKERGDREVFDRILEAVGSLDDPEGLVSEMMRKYERGEEPEKSLIRGVVSAVLEGFRETLGRFGVDFDDWDWESDLLWSGLVNKIIEEARRSPFLTTHKDAIALDIPRIVREVLARDPEAASTIKLPRSLEIPPLILVRSDGTTLYTTRDLAYSVYKFRVTGADRVINVIGADQRLPQLQIRLALLGLGYRREALNMMHYDYEIVSLPGRRMSSRRGEYVTLDELLEMAKARSVREVESRNPGADRDWIESTAEKIAVGAVRFALVRPGRLKPITLDVERILDLKENTAPYLQYTYARASSILEKHGEIDYLKAHPASLEEGSRRELFVEALRFPLVSAKAADDLAPEDLASYLLRLADMFNSWYQKDSVIHEEWEGARHAKAALVLLVKSVIGEGLRLLGVEPLEKM</sequence>